<dbReference type="EC" id="2.7.4.25" evidence="1"/>
<dbReference type="EMBL" id="AL591981">
    <property type="protein sequence ID" value="CAD00017.1"/>
    <property type="molecule type" value="Genomic_DNA"/>
</dbReference>
<dbReference type="PIR" id="AC1317">
    <property type="entry name" value="AC1317"/>
</dbReference>
<dbReference type="RefSeq" id="NP_465463.1">
    <property type="nucleotide sequence ID" value="NC_003210.1"/>
</dbReference>
<dbReference type="RefSeq" id="WP_003723586.1">
    <property type="nucleotide sequence ID" value="NZ_CP149495.1"/>
</dbReference>
<dbReference type="SMR" id="Q8Y5W6"/>
<dbReference type="STRING" id="169963.gene:17594624"/>
<dbReference type="PaxDb" id="169963-lmo1939"/>
<dbReference type="EnsemblBacteria" id="CAD00017">
    <property type="protein sequence ID" value="CAD00017"/>
    <property type="gene ID" value="CAD00017"/>
</dbReference>
<dbReference type="GeneID" id="984888"/>
<dbReference type="KEGG" id="lmo:lmo1939"/>
<dbReference type="PATRIC" id="fig|169963.11.peg.1986"/>
<dbReference type="eggNOG" id="COG0283">
    <property type="taxonomic scope" value="Bacteria"/>
</dbReference>
<dbReference type="HOGENOM" id="CLU_079959_0_2_9"/>
<dbReference type="OrthoDB" id="9807434at2"/>
<dbReference type="PhylomeDB" id="Q8Y5W6"/>
<dbReference type="BioCyc" id="LMON169963:LMO1939-MONOMER"/>
<dbReference type="Proteomes" id="UP000000817">
    <property type="component" value="Chromosome"/>
</dbReference>
<dbReference type="GO" id="GO:0005829">
    <property type="term" value="C:cytosol"/>
    <property type="evidence" value="ECO:0000318"/>
    <property type="project" value="GO_Central"/>
</dbReference>
<dbReference type="GO" id="GO:0004127">
    <property type="term" value="F:(d)CMP kinase activity"/>
    <property type="evidence" value="ECO:0000318"/>
    <property type="project" value="GO_Central"/>
</dbReference>
<dbReference type="GO" id="GO:0005524">
    <property type="term" value="F:ATP binding"/>
    <property type="evidence" value="ECO:0007669"/>
    <property type="project" value="UniProtKB-UniRule"/>
</dbReference>
<dbReference type="GO" id="GO:0036430">
    <property type="term" value="F:CMP kinase activity"/>
    <property type="evidence" value="ECO:0007669"/>
    <property type="project" value="RHEA"/>
</dbReference>
<dbReference type="GO" id="GO:0036431">
    <property type="term" value="F:dCMP kinase activity"/>
    <property type="evidence" value="ECO:0007669"/>
    <property type="project" value="RHEA"/>
</dbReference>
<dbReference type="GO" id="GO:0015949">
    <property type="term" value="P:nucleobase-containing small molecule interconversion"/>
    <property type="evidence" value="ECO:0000318"/>
    <property type="project" value="GO_Central"/>
</dbReference>
<dbReference type="GO" id="GO:0006220">
    <property type="term" value="P:pyrimidine nucleotide metabolic process"/>
    <property type="evidence" value="ECO:0007669"/>
    <property type="project" value="UniProtKB-UniRule"/>
</dbReference>
<dbReference type="CDD" id="cd02020">
    <property type="entry name" value="CMPK"/>
    <property type="match status" value="1"/>
</dbReference>
<dbReference type="FunFam" id="3.40.50.300:FF:000484">
    <property type="entry name" value="Cytidylate kinase"/>
    <property type="match status" value="1"/>
</dbReference>
<dbReference type="Gene3D" id="3.40.50.300">
    <property type="entry name" value="P-loop containing nucleotide triphosphate hydrolases"/>
    <property type="match status" value="1"/>
</dbReference>
<dbReference type="HAMAP" id="MF_00238">
    <property type="entry name" value="Cytidyl_kinase_type1"/>
    <property type="match status" value="1"/>
</dbReference>
<dbReference type="InterPro" id="IPR003136">
    <property type="entry name" value="Cytidylate_kin"/>
</dbReference>
<dbReference type="InterPro" id="IPR011994">
    <property type="entry name" value="Cytidylate_kinase_dom"/>
</dbReference>
<dbReference type="InterPro" id="IPR027417">
    <property type="entry name" value="P-loop_NTPase"/>
</dbReference>
<dbReference type="NCBIfam" id="TIGR00017">
    <property type="entry name" value="cmk"/>
    <property type="match status" value="1"/>
</dbReference>
<dbReference type="PANTHER" id="PTHR21299:SF2">
    <property type="entry name" value="CYTIDYLATE KINASE"/>
    <property type="match status" value="1"/>
</dbReference>
<dbReference type="PANTHER" id="PTHR21299">
    <property type="entry name" value="CYTIDYLATE KINASE/PANTOATE-BETA-ALANINE LIGASE"/>
    <property type="match status" value="1"/>
</dbReference>
<dbReference type="Pfam" id="PF02224">
    <property type="entry name" value="Cytidylate_kin"/>
    <property type="match status" value="1"/>
</dbReference>
<dbReference type="SUPFAM" id="SSF52540">
    <property type="entry name" value="P-loop containing nucleoside triphosphate hydrolases"/>
    <property type="match status" value="1"/>
</dbReference>
<accession>Q8Y5W6</accession>
<organism>
    <name type="scientific">Listeria monocytogenes serovar 1/2a (strain ATCC BAA-679 / EGD-e)</name>
    <dbReference type="NCBI Taxonomy" id="169963"/>
    <lineage>
        <taxon>Bacteria</taxon>
        <taxon>Bacillati</taxon>
        <taxon>Bacillota</taxon>
        <taxon>Bacilli</taxon>
        <taxon>Bacillales</taxon>
        <taxon>Listeriaceae</taxon>
        <taxon>Listeria</taxon>
    </lineage>
</organism>
<gene>
    <name evidence="1" type="primary">cmk</name>
    <name type="ordered locus">lmo1939</name>
</gene>
<comment type="catalytic activity">
    <reaction evidence="1">
        <text>CMP + ATP = CDP + ADP</text>
        <dbReference type="Rhea" id="RHEA:11600"/>
        <dbReference type="ChEBI" id="CHEBI:30616"/>
        <dbReference type="ChEBI" id="CHEBI:58069"/>
        <dbReference type="ChEBI" id="CHEBI:60377"/>
        <dbReference type="ChEBI" id="CHEBI:456216"/>
        <dbReference type="EC" id="2.7.4.25"/>
    </reaction>
</comment>
<comment type="catalytic activity">
    <reaction evidence="1">
        <text>dCMP + ATP = dCDP + ADP</text>
        <dbReference type="Rhea" id="RHEA:25094"/>
        <dbReference type="ChEBI" id="CHEBI:30616"/>
        <dbReference type="ChEBI" id="CHEBI:57566"/>
        <dbReference type="ChEBI" id="CHEBI:58593"/>
        <dbReference type="ChEBI" id="CHEBI:456216"/>
        <dbReference type="EC" id="2.7.4.25"/>
    </reaction>
</comment>
<comment type="subcellular location">
    <subcellularLocation>
        <location evidence="1">Cytoplasm</location>
    </subcellularLocation>
</comment>
<comment type="similarity">
    <text evidence="1">Belongs to the cytidylate kinase family. Type 1 subfamily.</text>
</comment>
<name>KCY_LISMO</name>
<protein>
    <recommendedName>
        <fullName evidence="1">Cytidylate kinase</fullName>
        <shortName evidence="1">CK</shortName>
        <ecNumber evidence="1">2.7.4.25</ecNumber>
    </recommendedName>
    <alternativeName>
        <fullName evidence="1">Cytidine monophosphate kinase</fullName>
        <shortName evidence="1">CMP kinase</shortName>
    </alternativeName>
</protein>
<evidence type="ECO:0000255" key="1">
    <source>
        <dbReference type="HAMAP-Rule" id="MF_00238"/>
    </source>
</evidence>
<keyword id="KW-0067">ATP-binding</keyword>
<keyword id="KW-0963">Cytoplasm</keyword>
<keyword id="KW-0418">Kinase</keyword>
<keyword id="KW-0547">Nucleotide-binding</keyword>
<keyword id="KW-1185">Reference proteome</keyword>
<keyword id="KW-0808">Transferase</keyword>
<proteinExistence type="inferred from homology"/>
<reference key="1">
    <citation type="journal article" date="2001" name="Science">
        <title>Comparative genomics of Listeria species.</title>
        <authorList>
            <person name="Glaser P."/>
            <person name="Frangeul L."/>
            <person name="Buchrieser C."/>
            <person name="Rusniok C."/>
            <person name="Amend A."/>
            <person name="Baquero F."/>
            <person name="Berche P."/>
            <person name="Bloecker H."/>
            <person name="Brandt P."/>
            <person name="Chakraborty T."/>
            <person name="Charbit A."/>
            <person name="Chetouani F."/>
            <person name="Couve E."/>
            <person name="de Daruvar A."/>
            <person name="Dehoux P."/>
            <person name="Domann E."/>
            <person name="Dominguez-Bernal G."/>
            <person name="Duchaud E."/>
            <person name="Durant L."/>
            <person name="Dussurget O."/>
            <person name="Entian K.-D."/>
            <person name="Fsihi H."/>
            <person name="Garcia-del Portillo F."/>
            <person name="Garrido P."/>
            <person name="Gautier L."/>
            <person name="Goebel W."/>
            <person name="Gomez-Lopez N."/>
            <person name="Hain T."/>
            <person name="Hauf J."/>
            <person name="Jackson D."/>
            <person name="Jones L.-M."/>
            <person name="Kaerst U."/>
            <person name="Kreft J."/>
            <person name="Kuhn M."/>
            <person name="Kunst F."/>
            <person name="Kurapkat G."/>
            <person name="Madueno E."/>
            <person name="Maitournam A."/>
            <person name="Mata Vicente J."/>
            <person name="Ng E."/>
            <person name="Nedjari H."/>
            <person name="Nordsiek G."/>
            <person name="Novella S."/>
            <person name="de Pablos B."/>
            <person name="Perez-Diaz J.-C."/>
            <person name="Purcell R."/>
            <person name="Remmel B."/>
            <person name="Rose M."/>
            <person name="Schlueter T."/>
            <person name="Simoes N."/>
            <person name="Tierrez A."/>
            <person name="Vazquez-Boland J.-A."/>
            <person name="Voss H."/>
            <person name="Wehland J."/>
            <person name="Cossart P."/>
        </authorList>
    </citation>
    <scope>NUCLEOTIDE SEQUENCE [LARGE SCALE GENOMIC DNA]</scope>
    <source>
        <strain>ATCC BAA-679 / EGD-e</strain>
    </source>
</reference>
<sequence>MTKKICIAIDGPAAAGKSTVAKIVAKKLRFVYIDTGAMYRAVTYIALKNNIAYEDEKAIAALLQKTVIRFEPGEVQQVFVGSENVTEVIRSIEVTNHVSIVAAHPSIREALQERQQVFATEGGIVMDGRDIGTAVLPNAELKIFLLASVEERAERRYKENMAKGFTGDLDQLKKEIEERDHLDYTRTHSPLKKADDAIEVDTTSMSIDQVANKILSLAELKINN</sequence>
<feature type="chain" id="PRO_0000131930" description="Cytidylate kinase">
    <location>
        <begin position="1"/>
        <end position="224"/>
    </location>
</feature>
<feature type="binding site" evidence="1">
    <location>
        <begin position="11"/>
        <end position="19"/>
    </location>
    <ligand>
        <name>ATP</name>
        <dbReference type="ChEBI" id="CHEBI:30616"/>
    </ligand>
</feature>